<reference key="1">
    <citation type="submission" date="2008-05" db="EMBL/GenBank/DDBJ databases">
        <title>Genome sequence of Helicobacter pylori from the remote Amazon: traces of Asian ancestry of the first Americans.</title>
        <authorList>
            <person name="Kersulyte D."/>
            <person name="Kalia A."/>
            <person name="Gilman R.H."/>
            <person name="Berg D.E."/>
        </authorList>
    </citation>
    <scope>NUCLEOTIDE SEQUENCE [LARGE SCALE GENOMIC DNA]</scope>
    <source>
        <strain>Shi470</strain>
    </source>
</reference>
<sequence>MDFITITSSNKTEEFALKQVAKQATSSLMYRLGKTIILASVCVEREPVGEDFLPLVVQFLEKSYAAGKIPGGFVKREGRAQDFEILTSRLIDRTLRPLFPKDYRYPTQITLMVLSHDVENDLQVSALNAASAALFLSHIAPIKSVSACRIARIGNEFIINPNTSLLNQSSLDLFVSGTKESLNMIEMRSLGQQLNALEEPLMLKALELAQKSLKETCTLYEEIFTPHQNELLFKESQGIIFNERLLDLLKNQYFDEIIKGIESSALSERENVFNEIARKISEAHSEFSLKEIELSLEKVKKTEIRCMIIKDKIRPDKRALEEVRPILIESDLLPMAHSSILFTRGQTQSLVVGVLGTDNDAQTHESLEHKAPIKERFMFHYNFPPFCVGEASSIGATSRRELGHGNLAKRALETSIKNKDQVIRLVSEILESNGSSSMASVCAGSLALYASGVEIYDLIAGVAMGMVSEGQDHAILSDISGLEDAEGDMDFKIAGNLEGITAMQMDTKMSGIQLEVLYQALLQAKKAREHILKIMHEAKEKIVINFSHLPTTEIFNVAPDKIVEIIGQGGRVIREIVEKFEVKIDLNKPSGEVKIMGNKERVLKTKEFILNYLHSLDQELEQYAIDEVLEAQVKRIVDFGAFLSLPKGGEGLLRKQNMDRCQVVLKEGDSIKCRVISFNKGKIALDLA</sequence>
<name>PNP_HELPS</name>
<dbReference type="EC" id="2.7.7.8" evidence="1"/>
<dbReference type="EMBL" id="CP001072">
    <property type="protein sequence ID" value="ACD48658.1"/>
    <property type="molecule type" value="Genomic_DNA"/>
</dbReference>
<dbReference type="RefSeq" id="WP_000345886.1">
    <property type="nucleotide sequence ID" value="NC_010698.2"/>
</dbReference>
<dbReference type="SMR" id="B2UUX6"/>
<dbReference type="KEGG" id="hps:HPSH_06280"/>
<dbReference type="HOGENOM" id="CLU_004217_2_2_7"/>
<dbReference type="GO" id="GO:0005829">
    <property type="term" value="C:cytosol"/>
    <property type="evidence" value="ECO:0007669"/>
    <property type="project" value="TreeGrafter"/>
</dbReference>
<dbReference type="GO" id="GO:0000175">
    <property type="term" value="F:3'-5'-RNA exonuclease activity"/>
    <property type="evidence" value="ECO:0007669"/>
    <property type="project" value="TreeGrafter"/>
</dbReference>
<dbReference type="GO" id="GO:0000287">
    <property type="term" value="F:magnesium ion binding"/>
    <property type="evidence" value="ECO:0007669"/>
    <property type="project" value="UniProtKB-UniRule"/>
</dbReference>
<dbReference type="GO" id="GO:0004654">
    <property type="term" value="F:polyribonucleotide nucleotidyltransferase activity"/>
    <property type="evidence" value="ECO:0007669"/>
    <property type="project" value="UniProtKB-UniRule"/>
</dbReference>
<dbReference type="GO" id="GO:0003723">
    <property type="term" value="F:RNA binding"/>
    <property type="evidence" value="ECO:0007669"/>
    <property type="project" value="UniProtKB-UniRule"/>
</dbReference>
<dbReference type="GO" id="GO:0006402">
    <property type="term" value="P:mRNA catabolic process"/>
    <property type="evidence" value="ECO:0007669"/>
    <property type="project" value="UniProtKB-UniRule"/>
</dbReference>
<dbReference type="GO" id="GO:0006396">
    <property type="term" value="P:RNA processing"/>
    <property type="evidence" value="ECO:0007669"/>
    <property type="project" value="InterPro"/>
</dbReference>
<dbReference type="CDD" id="cd02393">
    <property type="entry name" value="KH-I_PNPase"/>
    <property type="match status" value="1"/>
</dbReference>
<dbReference type="CDD" id="cd11364">
    <property type="entry name" value="RNase_PH_PNPase_2"/>
    <property type="match status" value="1"/>
</dbReference>
<dbReference type="FunFam" id="3.30.1370.10:FF:000001">
    <property type="entry name" value="Polyribonucleotide nucleotidyltransferase"/>
    <property type="match status" value="1"/>
</dbReference>
<dbReference type="FunFam" id="3.30.230.70:FF:000026">
    <property type="entry name" value="Polyribonucleotide nucleotidyltransferase"/>
    <property type="match status" value="1"/>
</dbReference>
<dbReference type="FunFam" id="3.30.230.70:FF:000029">
    <property type="entry name" value="Polyribonucleotide nucleotidyltransferase"/>
    <property type="match status" value="1"/>
</dbReference>
<dbReference type="Gene3D" id="3.30.230.70">
    <property type="entry name" value="GHMP Kinase, N-terminal domain"/>
    <property type="match status" value="2"/>
</dbReference>
<dbReference type="Gene3D" id="3.30.1370.10">
    <property type="entry name" value="K Homology domain, type 1"/>
    <property type="match status" value="1"/>
</dbReference>
<dbReference type="Gene3D" id="2.40.50.140">
    <property type="entry name" value="Nucleic acid-binding proteins"/>
    <property type="match status" value="1"/>
</dbReference>
<dbReference type="HAMAP" id="MF_01595">
    <property type="entry name" value="PNPase"/>
    <property type="match status" value="1"/>
</dbReference>
<dbReference type="InterPro" id="IPR001247">
    <property type="entry name" value="ExoRNase_PH_dom1"/>
</dbReference>
<dbReference type="InterPro" id="IPR015847">
    <property type="entry name" value="ExoRNase_PH_dom2"/>
</dbReference>
<dbReference type="InterPro" id="IPR036345">
    <property type="entry name" value="ExoRNase_PH_dom2_sf"/>
</dbReference>
<dbReference type="InterPro" id="IPR004087">
    <property type="entry name" value="KH_dom"/>
</dbReference>
<dbReference type="InterPro" id="IPR004088">
    <property type="entry name" value="KH_dom_type_1"/>
</dbReference>
<dbReference type="InterPro" id="IPR036612">
    <property type="entry name" value="KH_dom_type_1_sf"/>
</dbReference>
<dbReference type="InterPro" id="IPR012340">
    <property type="entry name" value="NA-bd_OB-fold"/>
</dbReference>
<dbReference type="InterPro" id="IPR012162">
    <property type="entry name" value="PNPase"/>
</dbReference>
<dbReference type="InterPro" id="IPR027408">
    <property type="entry name" value="PNPase/RNase_PH_dom_sf"/>
</dbReference>
<dbReference type="InterPro" id="IPR036456">
    <property type="entry name" value="PNPase_PH_RNA-bd_sf"/>
</dbReference>
<dbReference type="InterPro" id="IPR020568">
    <property type="entry name" value="Ribosomal_Su5_D2-typ_SF"/>
</dbReference>
<dbReference type="InterPro" id="IPR003029">
    <property type="entry name" value="S1_domain"/>
</dbReference>
<dbReference type="NCBIfam" id="TIGR03591">
    <property type="entry name" value="polynuc_phos"/>
    <property type="match status" value="1"/>
</dbReference>
<dbReference type="NCBIfam" id="NF008805">
    <property type="entry name" value="PRK11824.1"/>
    <property type="match status" value="1"/>
</dbReference>
<dbReference type="PANTHER" id="PTHR11252">
    <property type="entry name" value="POLYRIBONUCLEOTIDE NUCLEOTIDYLTRANSFERASE"/>
    <property type="match status" value="1"/>
</dbReference>
<dbReference type="PANTHER" id="PTHR11252:SF0">
    <property type="entry name" value="POLYRIBONUCLEOTIDE NUCLEOTIDYLTRANSFERASE 1, MITOCHONDRIAL"/>
    <property type="match status" value="1"/>
</dbReference>
<dbReference type="Pfam" id="PF00013">
    <property type="entry name" value="KH_1"/>
    <property type="match status" value="1"/>
</dbReference>
<dbReference type="Pfam" id="PF01138">
    <property type="entry name" value="RNase_PH"/>
    <property type="match status" value="2"/>
</dbReference>
<dbReference type="Pfam" id="PF03725">
    <property type="entry name" value="RNase_PH_C"/>
    <property type="match status" value="2"/>
</dbReference>
<dbReference type="Pfam" id="PF00575">
    <property type="entry name" value="S1"/>
    <property type="match status" value="1"/>
</dbReference>
<dbReference type="PIRSF" id="PIRSF005499">
    <property type="entry name" value="PNPase"/>
    <property type="match status" value="1"/>
</dbReference>
<dbReference type="SMART" id="SM00322">
    <property type="entry name" value="KH"/>
    <property type="match status" value="1"/>
</dbReference>
<dbReference type="SMART" id="SM00316">
    <property type="entry name" value="S1"/>
    <property type="match status" value="1"/>
</dbReference>
<dbReference type="SUPFAM" id="SSF54791">
    <property type="entry name" value="Eukaryotic type KH-domain (KH-domain type I)"/>
    <property type="match status" value="1"/>
</dbReference>
<dbReference type="SUPFAM" id="SSF50249">
    <property type="entry name" value="Nucleic acid-binding proteins"/>
    <property type="match status" value="1"/>
</dbReference>
<dbReference type="SUPFAM" id="SSF46915">
    <property type="entry name" value="Polynucleotide phosphorylase/guanosine pentaphosphate synthase (PNPase/GPSI), domain 3"/>
    <property type="match status" value="1"/>
</dbReference>
<dbReference type="SUPFAM" id="SSF55666">
    <property type="entry name" value="Ribonuclease PH domain 2-like"/>
    <property type="match status" value="2"/>
</dbReference>
<dbReference type="SUPFAM" id="SSF54211">
    <property type="entry name" value="Ribosomal protein S5 domain 2-like"/>
    <property type="match status" value="2"/>
</dbReference>
<dbReference type="PROSITE" id="PS50084">
    <property type="entry name" value="KH_TYPE_1"/>
    <property type="match status" value="1"/>
</dbReference>
<dbReference type="PROSITE" id="PS50126">
    <property type="entry name" value="S1"/>
    <property type="match status" value="1"/>
</dbReference>
<keyword id="KW-0963">Cytoplasm</keyword>
<keyword id="KW-0460">Magnesium</keyword>
<keyword id="KW-0479">Metal-binding</keyword>
<keyword id="KW-0548">Nucleotidyltransferase</keyword>
<keyword id="KW-0694">RNA-binding</keyword>
<keyword id="KW-0808">Transferase</keyword>
<feature type="chain" id="PRO_0000381903" description="Polyribonucleotide nucleotidyltransferase">
    <location>
        <begin position="1"/>
        <end position="688"/>
    </location>
</feature>
<feature type="domain" description="KH" evidence="1">
    <location>
        <begin position="550"/>
        <end position="609"/>
    </location>
</feature>
<feature type="domain" description="S1 motif" evidence="1">
    <location>
        <begin position="626"/>
        <end position="688"/>
    </location>
</feature>
<feature type="binding site" evidence="1">
    <location>
        <position position="484"/>
    </location>
    <ligand>
        <name>Mg(2+)</name>
        <dbReference type="ChEBI" id="CHEBI:18420"/>
    </ligand>
</feature>
<feature type="binding site" evidence="1">
    <location>
        <position position="490"/>
    </location>
    <ligand>
        <name>Mg(2+)</name>
        <dbReference type="ChEBI" id="CHEBI:18420"/>
    </ligand>
</feature>
<comment type="function">
    <text evidence="1">Involved in mRNA degradation. Catalyzes the phosphorolysis of single-stranded polyribonucleotides processively in the 3'- to 5'-direction.</text>
</comment>
<comment type="catalytic activity">
    <reaction evidence="1">
        <text>RNA(n+1) + phosphate = RNA(n) + a ribonucleoside 5'-diphosphate</text>
        <dbReference type="Rhea" id="RHEA:22096"/>
        <dbReference type="Rhea" id="RHEA-COMP:14527"/>
        <dbReference type="Rhea" id="RHEA-COMP:17342"/>
        <dbReference type="ChEBI" id="CHEBI:43474"/>
        <dbReference type="ChEBI" id="CHEBI:57930"/>
        <dbReference type="ChEBI" id="CHEBI:140395"/>
        <dbReference type="EC" id="2.7.7.8"/>
    </reaction>
</comment>
<comment type="cofactor">
    <cofactor evidence="1">
        <name>Mg(2+)</name>
        <dbReference type="ChEBI" id="CHEBI:18420"/>
    </cofactor>
</comment>
<comment type="subcellular location">
    <subcellularLocation>
        <location evidence="1">Cytoplasm</location>
    </subcellularLocation>
</comment>
<comment type="similarity">
    <text evidence="1">Belongs to the polyribonucleotide nucleotidyltransferase family.</text>
</comment>
<proteinExistence type="inferred from homology"/>
<protein>
    <recommendedName>
        <fullName evidence="1">Polyribonucleotide nucleotidyltransferase</fullName>
        <ecNumber evidence="1">2.7.7.8</ecNumber>
    </recommendedName>
    <alternativeName>
        <fullName evidence="1">Polynucleotide phosphorylase</fullName>
        <shortName evidence="1">PNPase</shortName>
    </alternativeName>
</protein>
<organism>
    <name type="scientific">Helicobacter pylori (strain Shi470)</name>
    <dbReference type="NCBI Taxonomy" id="512562"/>
    <lineage>
        <taxon>Bacteria</taxon>
        <taxon>Pseudomonadati</taxon>
        <taxon>Campylobacterota</taxon>
        <taxon>Epsilonproteobacteria</taxon>
        <taxon>Campylobacterales</taxon>
        <taxon>Helicobacteraceae</taxon>
        <taxon>Helicobacter</taxon>
    </lineage>
</organism>
<accession>B2UUX6</accession>
<gene>
    <name evidence="1" type="primary">pnp</name>
    <name type="ordered locus">HPSH_06280</name>
</gene>
<evidence type="ECO:0000255" key="1">
    <source>
        <dbReference type="HAMAP-Rule" id="MF_01595"/>
    </source>
</evidence>